<reference key="1">
    <citation type="journal article" date="2003" name="Biochem. J.">
        <title>Molecular cloning, gene organization and expression of the human UDP-GalNAc:Neu5Acalpha2-3Galbeta-R beta1,4-N-acetylgalactosaminyltransferase responsible for the biosynthesis of the blood group Sda/Cad antigen: evidence for an unusual extended cytoplasmic domain.</title>
        <authorList>
            <person name="Montiel M.D."/>
            <person name="Krzewinski-Recchi M.A."/>
            <person name="Delannoy P."/>
            <person name="Harduin-Lepers A."/>
        </authorList>
    </citation>
    <scope>NUCLEOTIDE SEQUENCE [MRNA] (ISOFORMS 1 AND 2)</scope>
    <scope>FUNCTION</scope>
    <scope>CATALYTIC ACTIVITY</scope>
    <scope>TISSUE SPECIFICITY</scope>
    <scope>VARIANT ASP-40</scope>
</reference>
<reference key="2">
    <citation type="journal article" date="2003" name="J. Biochem.">
        <title>Molecular cloning of the human beta1,4 N-acetylgalactosaminyltransferase responsible for the biosynthesis of the Sd(a) histo-blood group antigen: the sequence predicts a very long cytoplasmic domain.</title>
        <authorList>
            <person name="Lo Presti L."/>
            <person name="Cabuy E."/>
            <person name="Chiricolo M."/>
            <person name="Dall'Olio F."/>
        </authorList>
    </citation>
    <scope>NUCLEOTIDE SEQUENCE [MRNA] (ISOFORM 1)</scope>
    <scope>FUNCTION</scope>
    <scope>VARIANT ASP-40</scope>
</reference>
<reference key="3">
    <citation type="journal article" date="2004" name="Nat. Genet.">
        <title>Complete sequencing and characterization of 21,243 full-length human cDNAs.</title>
        <authorList>
            <person name="Ota T."/>
            <person name="Suzuki Y."/>
            <person name="Nishikawa T."/>
            <person name="Otsuki T."/>
            <person name="Sugiyama T."/>
            <person name="Irie R."/>
            <person name="Wakamatsu A."/>
            <person name="Hayashi K."/>
            <person name="Sato H."/>
            <person name="Nagai K."/>
            <person name="Kimura K."/>
            <person name="Makita H."/>
            <person name="Sekine M."/>
            <person name="Obayashi M."/>
            <person name="Nishi T."/>
            <person name="Shibahara T."/>
            <person name="Tanaka T."/>
            <person name="Ishii S."/>
            <person name="Yamamoto J."/>
            <person name="Saito K."/>
            <person name="Kawai Y."/>
            <person name="Isono Y."/>
            <person name="Nakamura Y."/>
            <person name="Nagahari K."/>
            <person name="Murakami K."/>
            <person name="Yasuda T."/>
            <person name="Iwayanagi T."/>
            <person name="Wagatsuma M."/>
            <person name="Shiratori A."/>
            <person name="Sudo H."/>
            <person name="Hosoiri T."/>
            <person name="Kaku Y."/>
            <person name="Kodaira H."/>
            <person name="Kondo H."/>
            <person name="Sugawara M."/>
            <person name="Takahashi M."/>
            <person name="Kanda K."/>
            <person name="Yokoi T."/>
            <person name="Furuya T."/>
            <person name="Kikkawa E."/>
            <person name="Omura Y."/>
            <person name="Abe K."/>
            <person name="Kamihara K."/>
            <person name="Katsuta N."/>
            <person name="Sato K."/>
            <person name="Tanikawa M."/>
            <person name="Yamazaki M."/>
            <person name="Ninomiya K."/>
            <person name="Ishibashi T."/>
            <person name="Yamashita H."/>
            <person name="Murakawa K."/>
            <person name="Fujimori K."/>
            <person name="Tanai H."/>
            <person name="Kimata M."/>
            <person name="Watanabe M."/>
            <person name="Hiraoka S."/>
            <person name="Chiba Y."/>
            <person name="Ishida S."/>
            <person name="Ono Y."/>
            <person name="Takiguchi S."/>
            <person name="Watanabe S."/>
            <person name="Yosida M."/>
            <person name="Hotuta T."/>
            <person name="Kusano J."/>
            <person name="Kanehori K."/>
            <person name="Takahashi-Fujii A."/>
            <person name="Hara H."/>
            <person name="Tanase T.-O."/>
            <person name="Nomura Y."/>
            <person name="Togiya S."/>
            <person name="Komai F."/>
            <person name="Hara R."/>
            <person name="Takeuchi K."/>
            <person name="Arita M."/>
            <person name="Imose N."/>
            <person name="Musashino K."/>
            <person name="Yuuki H."/>
            <person name="Oshima A."/>
            <person name="Sasaki N."/>
            <person name="Aotsuka S."/>
            <person name="Yoshikawa Y."/>
            <person name="Matsunawa H."/>
            <person name="Ichihara T."/>
            <person name="Shiohata N."/>
            <person name="Sano S."/>
            <person name="Moriya S."/>
            <person name="Momiyama H."/>
            <person name="Satoh N."/>
            <person name="Takami S."/>
            <person name="Terashima Y."/>
            <person name="Suzuki O."/>
            <person name="Nakagawa S."/>
            <person name="Senoh A."/>
            <person name="Mizoguchi H."/>
            <person name="Goto Y."/>
            <person name="Shimizu F."/>
            <person name="Wakebe H."/>
            <person name="Hishigaki H."/>
            <person name="Watanabe T."/>
            <person name="Sugiyama A."/>
            <person name="Takemoto M."/>
            <person name="Kawakami B."/>
            <person name="Yamazaki M."/>
            <person name="Watanabe K."/>
            <person name="Kumagai A."/>
            <person name="Itakura S."/>
            <person name="Fukuzumi Y."/>
            <person name="Fujimori Y."/>
            <person name="Komiyama M."/>
            <person name="Tashiro H."/>
            <person name="Tanigami A."/>
            <person name="Fujiwara T."/>
            <person name="Ono T."/>
            <person name="Yamada K."/>
            <person name="Fujii Y."/>
            <person name="Ozaki K."/>
            <person name="Hirao M."/>
            <person name="Ohmori Y."/>
            <person name="Kawabata A."/>
            <person name="Hikiji T."/>
            <person name="Kobatake N."/>
            <person name="Inagaki H."/>
            <person name="Ikema Y."/>
            <person name="Okamoto S."/>
            <person name="Okitani R."/>
            <person name="Kawakami T."/>
            <person name="Noguchi S."/>
            <person name="Itoh T."/>
            <person name="Shigeta K."/>
            <person name="Senba T."/>
            <person name="Matsumura K."/>
            <person name="Nakajima Y."/>
            <person name="Mizuno T."/>
            <person name="Morinaga M."/>
            <person name="Sasaki M."/>
            <person name="Togashi T."/>
            <person name="Oyama M."/>
            <person name="Hata H."/>
            <person name="Watanabe M."/>
            <person name="Komatsu T."/>
            <person name="Mizushima-Sugano J."/>
            <person name="Satoh T."/>
            <person name="Shirai Y."/>
            <person name="Takahashi Y."/>
            <person name="Nakagawa K."/>
            <person name="Okumura K."/>
            <person name="Nagase T."/>
            <person name="Nomura N."/>
            <person name="Kikuchi H."/>
            <person name="Masuho Y."/>
            <person name="Yamashita R."/>
            <person name="Nakai K."/>
            <person name="Yada T."/>
            <person name="Nakamura Y."/>
            <person name="Ohara O."/>
            <person name="Isogai T."/>
            <person name="Sugano S."/>
        </authorList>
    </citation>
    <scope>NUCLEOTIDE SEQUENCE [LARGE SCALE MRNA] (ISOFORM 3)</scope>
    <source>
        <tissue>Testis</tissue>
    </source>
</reference>
<reference key="4">
    <citation type="journal article" date="2006" name="Nature">
        <title>DNA sequence of human chromosome 17 and analysis of rearrangement in the human lineage.</title>
        <authorList>
            <person name="Zody M.C."/>
            <person name="Garber M."/>
            <person name="Adams D.J."/>
            <person name="Sharpe T."/>
            <person name="Harrow J."/>
            <person name="Lupski J.R."/>
            <person name="Nicholson C."/>
            <person name="Searle S.M."/>
            <person name="Wilming L."/>
            <person name="Young S.K."/>
            <person name="Abouelleil A."/>
            <person name="Allen N.R."/>
            <person name="Bi W."/>
            <person name="Bloom T."/>
            <person name="Borowsky M.L."/>
            <person name="Bugalter B.E."/>
            <person name="Butler J."/>
            <person name="Chang J.L."/>
            <person name="Chen C.-K."/>
            <person name="Cook A."/>
            <person name="Corum B."/>
            <person name="Cuomo C.A."/>
            <person name="de Jong P.J."/>
            <person name="DeCaprio D."/>
            <person name="Dewar K."/>
            <person name="FitzGerald M."/>
            <person name="Gilbert J."/>
            <person name="Gibson R."/>
            <person name="Gnerre S."/>
            <person name="Goldstein S."/>
            <person name="Grafham D.V."/>
            <person name="Grocock R."/>
            <person name="Hafez N."/>
            <person name="Hagopian D.S."/>
            <person name="Hart E."/>
            <person name="Norman C.H."/>
            <person name="Humphray S."/>
            <person name="Jaffe D.B."/>
            <person name="Jones M."/>
            <person name="Kamal M."/>
            <person name="Khodiyar V.K."/>
            <person name="LaButti K."/>
            <person name="Laird G."/>
            <person name="Lehoczky J."/>
            <person name="Liu X."/>
            <person name="Lokyitsang T."/>
            <person name="Loveland J."/>
            <person name="Lui A."/>
            <person name="Macdonald P."/>
            <person name="Major J.E."/>
            <person name="Matthews L."/>
            <person name="Mauceli E."/>
            <person name="McCarroll S.A."/>
            <person name="Mihalev A.H."/>
            <person name="Mudge J."/>
            <person name="Nguyen C."/>
            <person name="Nicol R."/>
            <person name="O'Leary S.B."/>
            <person name="Osoegawa K."/>
            <person name="Schwartz D.C."/>
            <person name="Shaw-Smith C."/>
            <person name="Stankiewicz P."/>
            <person name="Steward C."/>
            <person name="Swarbreck D."/>
            <person name="Venkataraman V."/>
            <person name="Whittaker C.A."/>
            <person name="Yang X."/>
            <person name="Zimmer A.R."/>
            <person name="Bradley A."/>
            <person name="Hubbard T."/>
            <person name="Birren B.W."/>
            <person name="Rogers J."/>
            <person name="Lander E.S."/>
            <person name="Nusbaum C."/>
        </authorList>
    </citation>
    <scope>NUCLEOTIDE SEQUENCE [LARGE SCALE GENOMIC DNA]</scope>
</reference>
<reference key="5">
    <citation type="submission" date="2005-09" db="EMBL/GenBank/DDBJ databases">
        <authorList>
            <person name="Mural R.J."/>
            <person name="Istrail S."/>
            <person name="Sutton G.G."/>
            <person name="Florea L."/>
            <person name="Halpern A.L."/>
            <person name="Mobarry C.M."/>
            <person name="Lippert R."/>
            <person name="Walenz B."/>
            <person name="Shatkay H."/>
            <person name="Dew I."/>
            <person name="Miller J.R."/>
            <person name="Flanigan M.J."/>
            <person name="Edwards N.J."/>
            <person name="Bolanos R."/>
            <person name="Fasulo D."/>
            <person name="Halldorsson B.V."/>
            <person name="Hannenhalli S."/>
            <person name="Turner R."/>
            <person name="Yooseph S."/>
            <person name="Lu F."/>
            <person name="Nusskern D.R."/>
            <person name="Shue B.C."/>
            <person name="Zheng X.H."/>
            <person name="Zhong F."/>
            <person name="Delcher A.L."/>
            <person name="Huson D.H."/>
            <person name="Kravitz S.A."/>
            <person name="Mouchard L."/>
            <person name="Reinert K."/>
            <person name="Remington K.A."/>
            <person name="Clark A.G."/>
            <person name="Waterman M.S."/>
            <person name="Eichler E.E."/>
            <person name="Adams M.D."/>
            <person name="Hunkapiller M.W."/>
            <person name="Myers E.W."/>
            <person name="Venter J.C."/>
        </authorList>
    </citation>
    <scope>NUCLEOTIDE SEQUENCE [LARGE SCALE GENOMIC DNA]</scope>
</reference>
<reference key="6">
    <citation type="journal article" date="2004" name="Genome Res.">
        <title>The status, quality, and expansion of the NIH full-length cDNA project: the Mammalian Gene Collection (MGC).</title>
        <authorList>
            <consortium name="The MGC Project Team"/>
        </authorList>
    </citation>
    <scope>NUCLEOTIDE SEQUENCE [LARGE SCALE MRNA] (ISOFORM 1)</scope>
    <scope>VARIANT ASP-40</scope>
</reference>
<reference key="7">
    <citation type="journal article" date="2005" name="Cancer Res.">
        <title>Introduction of Sd(a) carbohydrate antigen in gastrointestinal cancer cells eliminates selectin ligands and inhibits metastasis.</title>
        <authorList>
            <person name="Kawamura Y.I."/>
            <person name="Kawashima R."/>
            <person name="Fukunaga R."/>
            <person name="Hirai K."/>
            <person name="Toyama-Sorimachi N."/>
            <person name="Tokuhara M."/>
            <person name="Shimizu T."/>
            <person name="Dohi T."/>
        </authorList>
    </citation>
    <scope>FUNCTION</scope>
    <scope>CATALYTIC ACTIVITY</scope>
</reference>
<reference key="8">
    <citation type="journal article" date="2008" name="Proc. Natl. Acad. Sci. U.S.A.">
        <title>A quantitative atlas of mitotic phosphorylation.</title>
        <authorList>
            <person name="Dephoure N."/>
            <person name="Zhou C."/>
            <person name="Villen J."/>
            <person name="Beausoleil S.A."/>
            <person name="Bakalarski C.E."/>
            <person name="Elledge S.J."/>
            <person name="Gygi S.P."/>
        </authorList>
    </citation>
    <scope>IDENTIFICATION BY MASS SPECTROMETRY [LARGE SCALE ANALYSIS]</scope>
    <source>
        <tissue>Cervix carcinoma</tissue>
    </source>
</reference>
<reference key="9">
    <citation type="journal article" date="2017" name="Cell Rep.">
        <title>A CRISPR Activation Screen Identifies a Pan-avian Influenza Virus Inhibitory Host Factor.</title>
        <authorList>
            <person name="Heaton B.E."/>
            <person name="Kennedy E.M."/>
            <person name="Dumm R.E."/>
            <person name="Harding A.T."/>
            <person name="Sacco M.T."/>
            <person name="Sachs D."/>
            <person name="Heaton N.S."/>
        </authorList>
    </citation>
    <scope>FUNCTION</scope>
</reference>
<reference key="10">
    <citation type="journal article" date="2018" name="FEBS J.">
        <title>The extended cytoplasmic tail of the human B4GALNT2 is critical for its Golgi targeting and post-Golgi sorting.</title>
        <authorList>
            <person name="Groux-Degroote S."/>
            <person name="Schulz C."/>
            <person name="Cogez V."/>
            <person name="Noel M."/>
            <person name="Portier L."/>
            <person name="Vicogne D."/>
            <person name="Solorzano C."/>
            <person name="Dall'Olio F."/>
            <person name="Steenackers A."/>
            <person name="Mortuaire M."/>
            <person name="Gonzalez-Pisfil M."/>
            <person name="Henry M."/>
            <person name="Foulquier F."/>
            <person name="Heliot L."/>
            <person name="Harduin-Lepers A."/>
        </authorList>
    </citation>
    <scope>SUBCELLULAR LOCATION (ISOFORMS 1 AND 2)</scope>
    <scope>MOTIF</scope>
    <scope>REGION</scope>
</reference>
<reference key="11">
    <citation type="journal article" date="2022" name="Int. J. Mol. Sci.">
        <title>Glycoproteomic and Phenotypic Elucidation of B4GALNT2 Expression Variants in the SID Histo-Blood Group System.</title>
        <authorList>
            <person name="Stenfelt L."/>
            <person name="Nilsson J."/>
            <person name="Hellberg A."/>
            <person name="Liew Y.W."/>
            <person name="Morrison J."/>
            <person name="Larson G."/>
            <person name="Olsson M.L."/>
        </authorList>
    </citation>
    <scope>FUNCTION</scope>
    <scope>SUBUNIT</scope>
    <scope>CATALYTIC ACTIVITY</scope>
    <scope>PATHWAY</scope>
    <scope>CHARACTERIZATION OF VARIANTS ARG-436; ARG-466 AND TRP-523</scope>
</reference>
<reference key="12">
    <citation type="journal article" date="2006" name="Science">
        <title>The consensus coding sequences of human breast and colorectal cancers.</title>
        <authorList>
            <person name="Sjoeblom T."/>
            <person name="Jones S."/>
            <person name="Wood L.D."/>
            <person name="Parsons D.W."/>
            <person name="Lin J."/>
            <person name="Barber T.D."/>
            <person name="Mandelker D."/>
            <person name="Leary R.J."/>
            <person name="Ptak J."/>
            <person name="Silliman N."/>
            <person name="Szabo S."/>
            <person name="Buckhaults P."/>
            <person name="Farrell C."/>
            <person name="Meeh P."/>
            <person name="Markowitz S.D."/>
            <person name="Willis J."/>
            <person name="Dawson D."/>
            <person name="Willson J.K.V."/>
            <person name="Gazdar A.F."/>
            <person name="Hartigan J."/>
            <person name="Wu L."/>
            <person name="Liu C."/>
            <person name="Parmigiani G."/>
            <person name="Park B.H."/>
            <person name="Bachman K.E."/>
            <person name="Papadopoulos N."/>
            <person name="Vogelstein B."/>
            <person name="Kinzler K.W."/>
            <person name="Velculescu V.E."/>
        </authorList>
    </citation>
    <scope>VARIANT [LARGE SCALE ANALYSIS] HIS-459</scope>
</reference>
<reference key="13">
    <citation type="journal article" date="2019" name="Biochem. Biophys. Rep.">
        <title>Missense mutations in the C-terminal portion of the B4GALNT2-encoded glycosyltransferase underlying the Sd(a-) phenotype.</title>
        <authorList>
            <person name="Stenfelt L."/>
            <person name="Hellberg A."/>
            <person name="Moeller M."/>
            <person name="Thornton N."/>
            <person name="Larson G."/>
            <person name="Olsson M.L."/>
        </authorList>
    </citation>
    <scope>VARIANTS ARG-436; ARG-466 AND TRP-523</scope>
    <scope>INVOLVEMENT IN SDPS</scope>
    <scope>POLYMORPHISM</scope>
</reference>
<sequence length="566" mass="63258">MGSAGFSVGKFHVEVASRGRECVSGTPECGNRLGSAGFGALCLELRGADPAWGPFAAHGRSRRQGSRFLWLLKILVIILVLGIVGFMFGSMFLQAVFSSPKPELPSPAPGVQKLKLLPEERLRNLFSYDGIWLFPKNQCKCEANKEQGGYNFQDAYGQSDLPAVKARRQAEFEHFQRREGLPRPLPLLVQPNLPFGYPVHGVEVMPLHTVPIPGLQFEGPDAPVYEVTLTASLGTLNTLADVPDSVVQGRGQKQLIISTSDRKLLKFILQHVTYTSTGYQHQKVDIVSLESRSSVAKFPVTIRHPVIPKLYDPGPERKLRNLVTIATKTFLRPHKLMIMLRSIREYYPDLTVIVADDSQKPLEIKDNHVEYYTMPFGKGWFAGRNLAISQVTTKYVLWVDDDFLFNEETKIEVLVDVLEKTELDVVGGSVLGNVFQFKLLLEQSENGACLHKRMGFFQPLDGFPSCVVTSGVVNFFLAHTERLQRVGFDPRLQRVAHSEFFIDGLGTLLVGSCPEVIIGHQSRSPVVDSELAALEKTYNTYRSNTLTRVQFKLALHYFKNHLQCAA</sequence>
<proteinExistence type="evidence at protein level"/>
<organism>
    <name type="scientific">Homo sapiens</name>
    <name type="common">Human</name>
    <dbReference type="NCBI Taxonomy" id="9606"/>
    <lineage>
        <taxon>Eukaryota</taxon>
        <taxon>Metazoa</taxon>
        <taxon>Chordata</taxon>
        <taxon>Craniata</taxon>
        <taxon>Vertebrata</taxon>
        <taxon>Euteleostomi</taxon>
        <taxon>Mammalia</taxon>
        <taxon>Eutheria</taxon>
        <taxon>Euarchontoglires</taxon>
        <taxon>Primates</taxon>
        <taxon>Haplorrhini</taxon>
        <taxon>Catarrhini</taxon>
        <taxon>Hominidae</taxon>
        <taxon>Homo</taxon>
    </lineage>
</organism>
<comment type="function">
    <text evidence="2 3 5 7 10">Beta-1,4 N-acetylgalactosaminyltransferase involved in the biosynthesis of Sd(a) histo-blood group antigen. Catalyzes the transfer of N-acetylgalactosamine (GalNAc) group in a beta-1,4-linkage from UDP-GalNAc to the galactose residue of NeuAcalpha2-&gt;3Gal-R to form Sd(a) glycan epitope GalNAcbeta1-&gt;4(NeuAcalpha2-&gt;3)Gal-R. The Sd(a) epitope is carried in O- and N-linked glycoproteins and glycolipids, including O-linked core 1 structures on GYPA/glycophorin, SLC4A1 and SLC29A1 in erythrocytes, N-linked glycans attached to the Tamm-Horsfall glycoprotein UMOD/uromodulin in renal fluids, O-linked core 3 glycans on mucins in colon and neolactosides in gastric mucosa (PubMed:12678917, PubMed:14688233, PubMed:16024623, PubMed:35409292). Confers protection against influenza A virus strains that attach to NeuAcalpha2-&gt;3-carrying host receptors. Modifies N-glycan chains on host receptors and prevents virus entry into cells (PubMed:28813663).</text>
</comment>
<comment type="catalytic activity">
    <reaction evidence="2 10">
        <text>an N-acetyl-alpha-neuraminyl-(2-&gt;3)-beta-D-galactosyl derivative + UDP-N-acetyl-alpha-D-galactosamine = an N-acetyl-beta-D-galactosaminyl-(1-&gt;4)-[N-acetyl-alpha-neuraminyl-(2-&gt;3)]-beta-D-galactosyl derivative + UDP + H(+)</text>
        <dbReference type="Rhea" id="RHEA:81947"/>
        <dbReference type="ChEBI" id="CHEBI:15378"/>
        <dbReference type="ChEBI" id="CHEBI:58223"/>
        <dbReference type="ChEBI" id="CHEBI:67138"/>
        <dbReference type="ChEBI" id="CHEBI:140308"/>
        <dbReference type="ChEBI" id="CHEBI:232045"/>
    </reaction>
    <physiologicalReaction direction="left-to-right" evidence="10">
        <dbReference type="Rhea" id="RHEA:81948"/>
    </physiologicalReaction>
</comment>
<comment type="catalytic activity">
    <reaction evidence="10">
        <text>a 3-O-{alpha-Neu5Ac-(2-&gt;3)-beta-D-Gal-(1-&gt;3)-[alpha-Neu5Ac-(2-&gt;6)]-alpha-D-GalNAc}-L-seryl-[protein] + UDP-N-acetyl-alpha-D-galactosamine = a 3-O-{[alpha-Neu5Ac-(2-&gt;3)]-beta-D-GalNAc-(1-&gt;4)-beta-D-Gal-(1-&gt;3)-[alpha-Neu5Ac-(2-&gt;6)]-alpha-D-GalNAc}-L-seryl-[protein] + UDP + H(+)</text>
        <dbReference type="Rhea" id="RHEA:81955"/>
        <dbReference type="Rhea" id="RHEA-COMP:16761"/>
        <dbReference type="Rhea" id="RHEA-COMP:19757"/>
        <dbReference type="ChEBI" id="CHEBI:15378"/>
        <dbReference type="ChEBI" id="CHEBI:58223"/>
        <dbReference type="ChEBI" id="CHEBI:67138"/>
        <dbReference type="ChEBI" id="CHEBI:156397"/>
        <dbReference type="ChEBI" id="CHEBI:232003"/>
    </reaction>
    <physiologicalReaction direction="left-to-right" evidence="10">
        <dbReference type="Rhea" id="RHEA:81956"/>
    </physiologicalReaction>
</comment>
<comment type="catalytic activity">
    <reaction evidence="10">
        <text>a 3-O-{alpha-Neu5Ac-(2-&gt;3)-beta-D-Gal-(1-&gt;3)-[alpha-Neu5Ac-(2-&gt;6)]-alpha-D-GalNAc}-L-threonyl-[protein] + UDP-N-acetyl-alpha-D-galactosamine = a 3-O-{[alpha-Neu5Ac-(2-&gt;3)]-beta-D-GalNAc-(1-&gt;4)-beta-D-Gal-(1-&gt;3)-[alpha-Neu5Ac-(2-&gt;6)]-alpha-D-GalNAc}-L-threonyl-[protein] + UDP + H(+)</text>
        <dbReference type="Rhea" id="RHEA:81971"/>
        <dbReference type="Rhea" id="RHEA-COMP:16763"/>
        <dbReference type="Rhea" id="RHEA-COMP:19778"/>
        <dbReference type="ChEBI" id="CHEBI:15378"/>
        <dbReference type="ChEBI" id="CHEBI:58223"/>
        <dbReference type="ChEBI" id="CHEBI:67138"/>
        <dbReference type="ChEBI" id="CHEBI:156398"/>
        <dbReference type="ChEBI" id="CHEBI:232035"/>
    </reaction>
    <physiologicalReaction direction="left-to-right" evidence="10">
        <dbReference type="Rhea" id="RHEA:81972"/>
    </physiologicalReaction>
</comment>
<comment type="catalytic activity">
    <reaction evidence="15">
        <text>a neolactoside IV(3)-alpha-NeuAc-nLc4Cer + UDP-N-acetyl-alpha-D-galactosamine = a neolactoside IV(4)-GalNAc,IV(3)-alpha-NeuAc-nLc4Cer + UDP + H(+)</text>
        <dbReference type="Rhea" id="RHEA:82011"/>
        <dbReference type="ChEBI" id="CHEBI:15378"/>
        <dbReference type="ChEBI" id="CHEBI:58223"/>
        <dbReference type="ChEBI" id="CHEBI:67138"/>
        <dbReference type="ChEBI" id="CHEBI:90390"/>
        <dbReference type="ChEBI" id="CHEBI:145079"/>
    </reaction>
    <physiologicalReaction direction="left-to-right" evidence="15">
        <dbReference type="Rhea" id="RHEA:82012"/>
    </physiologicalReaction>
</comment>
<comment type="pathway">
    <text evidence="10">Protein modification; protein glycosylation.</text>
</comment>
<comment type="pathway">
    <text evidence="15">Glycolipid biosynthesis.</text>
</comment>
<comment type="subunit">
    <text evidence="16">Homodimer; disulfide-linked.</text>
</comment>
<comment type="interaction">
    <interactant intactId="EBI-1042940">
        <id>Q8NHY0</id>
    </interactant>
    <interactant intactId="EBI-11343438">
        <id>Q3SXY8</id>
        <label>ARL13B</label>
    </interactant>
    <organismsDiffer>false</organismsDiffer>
    <experiments>3</experiments>
</comment>
<comment type="interaction">
    <interactant intactId="EBI-1042940">
        <id>Q8NHY0</id>
    </interactant>
    <interactant intactId="EBI-11532900">
        <id>J3KQ12</id>
        <label>BSCL2</label>
    </interactant>
    <organismsDiffer>false</organismsDiffer>
    <experiments>3</experiments>
</comment>
<comment type="interaction">
    <interactant intactId="EBI-1042940">
        <id>Q8NHY0</id>
    </interactant>
    <interactant intactId="EBI-18304435">
        <id>Q5JX71</id>
        <label>FAM209A</label>
    </interactant>
    <organismsDiffer>false</organismsDiffer>
    <experiments>3</experiments>
</comment>
<comment type="interaction">
    <interactant intactId="EBI-1042940">
        <id>Q8NHY0</id>
    </interactant>
    <interactant intactId="EBI-9087860">
        <id>P32243-2</id>
        <label>OTX2</label>
    </interactant>
    <organismsDiffer>false</organismsDiffer>
    <experiments>3</experiments>
</comment>
<comment type="subcellular location">
    <molecule>Isoform 1</molecule>
    <subcellularLocation>
        <location evidence="8">Golgi apparatus</location>
        <location evidence="8">trans-Golgi network membrane</location>
        <topology evidence="1">Single-pass type II membrane protein</topology>
    </subcellularLocation>
    <subcellularLocation>
        <location evidence="8">Cytoplasmic vesicle membrane</location>
        <topology evidence="1">Single-pass type II membrane protein</topology>
    </subcellularLocation>
    <text evidence="8">Partially colocalizes with EEA1 and LAMP2 in early endosomes and lysosomes, respectively.</text>
</comment>
<comment type="subcellular location">
    <molecule>Isoform 2</molecule>
    <subcellularLocation>
        <location evidence="8">Golgi apparatus</location>
        <location evidence="8">trans-Golgi network membrane</location>
        <topology evidence="1">Single-pass type II membrane protein</topology>
    </subcellularLocation>
</comment>
<comment type="alternative products">
    <event type="alternative splicing"/>
    <isoform>
        <id>Q8NHY0-1</id>
        <name>1</name>
        <sequence type="displayed"/>
    </isoform>
    <isoform>
        <id>Q8NHY0-2</id>
        <name>2</name>
        <sequence type="described" ref="VSP_017131"/>
    </isoform>
    <isoform>
        <id>Q8NHY0-3</id>
        <name>3</name>
        <sequence type="described" ref="VSP_045195"/>
    </isoform>
</comment>
<comment type="tissue specificity">
    <text evidence="2">Widely expressed. Highly expressed in colon and to a lesser extent in kidney, stomach, ileum and rectum.</text>
</comment>
<comment type="polymorphism">
    <text evidence="9">The Sd(a) antigen on red blood cells defines the SID blood group system. There is considerable variability in the strength of antigen expression, ranging from ordinary Sd(a+) to strong Sd(a++) expression [MIM:615018]. Lack of Sd(a) antigen results in the Sd(a-) phenotype, due to genetic variants in B4GALNT2.</text>
</comment>
<comment type="disease" evidence="9">
    <disease id="DI-06283">
        <name>Sd(a) polyagglutination syndrome</name>
        <acronym>SDPS</acronym>
        <description>A condition characterized by red blood cells agglutination upon exposure to almost all human sera, but not to autologous serum or the sera of newborns. The condition becomes apparent during blood typing and cross-matching in the laboratory. SDPS depends on the strength of expression of the Sd(a) antigen on red blood cells. Most people have weak anti-Sd(a) antibodies in their serum, which is usually of no clinical importance, but can result in red cell agglutination if they are transfused with cells showing strong Sd(a) expression.</description>
        <dbReference type="MIM" id="615018"/>
    </disease>
    <text>The gene represented in this entry is involved in disease pathogenesis.</text>
</comment>
<comment type="similarity">
    <text evidence="14">Belongs to the glycosyltransferase 2 family.</text>
</comment>
<comment type="online information" name="Functional Glycomics Gateway - GTase">
    <link uri="http://www.functionalglycomics.org/glycomics/molecule/jsp/glycoEnzyme/viewGlycoEnzyme.jsp?gbpId=gt_hum_482"/>
    <text>Beta-1,4 N-acetylgalactosaminyltransferase 2</text>
</comment>
<accession>Q8NHY0</accession>
<accession>B4DZE4</accession>
<accession>Q14CP1</accession>
<accession>Q86Y40</accession>
<dbReference type="EC" id="2.4.1.-" evidence="10"/>
<dbReference type="EMBL" id="AJ517770">
    <property type="protein sequence ID" value="CAD57148.1"/>
    <property type="molecule type" value="mRNA"/>
</dbReference>
<dbReference type="EMBL" id="AJ517771">
    <property type="protein sequence ID" value="CAD57149.1"/>
    <property type="molecule type" value="mRNA"/>
</dbReference>
<dbReference type="EMBL" id="AF510036">
    <property type="protein sequence ID" value="AAM34756.1"/>
    <property type="molecule type" value="mRNA"/>
</dbReference>
<dbReference type="EMBL" id="AK302876">
    <property type="protein sequence ID" value="BAG64056.1"/>
    <property type="molecule type" value="mRNA"/>
</dbReference>
<dbReference type="EMBL" id="AC069454">
    <property type="status" value="NOT_ANNOTATED_CDS"/>
    <property type="molecule type" value="Genomic_DNA"/>
</dbReference>
<dbReference type="EMBL" id="CH471109">
    <property type="protein sequence ID" value="EAW94691.1"/>
    <property type="molecule type" value="Genomic_DNA"/>
</dbReference>
<dbReference type="EMBL" id="BC113675">
    <property type="protein sequence ID" value="AAI13676.1"/>
    <property type="molecule type" value="mRNA"/>
</dbReference>
<dbReference type="EMBL" id="BC113677">
    <property type="protein sequence ID" value="AAI13678.1"/>
    <property type="molecule type" value="mRNA"/>
</dbReference>
<dbReference type="CCDS" id="CCDS11544.1">
    <molecule id="Q8NHY0-1"/>
</dbReference>
<dbReference type="CCDS" id="CCDS54139.1">
    <molecule id="Q8NHY0-2"/>
</dbReference>
<dbReference type="CCDS" id="CCDS54140.1">
    <molecule id="Q8NHY0-3"/>
</dbReference>
<dbReference type="RefSeq" id="NP_001152859.1">
    <molecule id="Q8NHY0-2"/>
    <property type="nucleotide sequence ID" value="NM_001159387.2"/>
</dbReference>
<dbReference type="RefSeq" id="NP_001152860.1">
    <molecule id="Q8NHY0-3"/>
    <property type="nucleotide sequence ID" value="NM_001159388.2"/>
</dbReference>
<dbReference type="RefSeq" id="NP_703147.2">
    <molecule id="Q8NHY0-1"/>
    <property type="nucleotide sequence ID" value="NM_153446.3"/>
</dbReference>
<dbReference type="RefSeq" id="XP_016879662.1">
    <molecule id="Q8NHY0-3"/>
    <property type="nucleotide sequence ID" value="XM_017024173.2"/>
</dbReference>
<dbReference type="RefSeq" id="XP_054170999.1">
    <molecule id="Q8NHY0-3"/>
    <property type="nucleotide sequence ID" value="XM_054315024.1"/>
</dbReference>
<dbReference type="BioGRID" id="125896">
    <property type="interactions" value="6"/>
</dbReference>
<dbReference type="FunCoup" id="Q8NHY0">
    <property type="interactions" value="52"/>
</dbReference>
<dbReference type="IntAct" id="Q8NHY0">
    <property type="interactions" value="5"/>
</dbReference>
<dbReference type="STRING" id="9606.ENSP00000300404"/>
<dbReference type="CAZy" id="GT12">
    <property type="family name" value="Glycosyltransferase Family 12"/>
</dbReference>
<dbReference type="GlyGen" id="Q8NHY0">
    <property type="glycosylation" value="1 site, 1 O-linked glycan (1 site)"/>
</dbReference>
<dbReference type="iPTMnet" id="Q8NHY0"/>
<dbReference type="PhosphoSitePlus" id="Q8NHY0"/>
<dbReference type="BioMuta" id="B4GALNT2"/>
<dbReference type="DMDM" id="296434406"/>
<dbReference type="jPOST" id="Q8NHY0"/>
<dbReference type="MassIVE" id="Q8NHY0"/>
<dbReference type="PaxDb" id="9606-ENSP00000300404"/>
<dbReference type="PeptideAtlas" id="Q8NHY0"/>
<dbReference type="ProteomicsDB" id="5593"/>
<dbReference type="ProteomicsDB" id="73783">
    <molecule id="Q8NHY0-1"/>
</dbReference>
<dbReference type="ProteomicsDB" id="73784">
    <molecule id="Q8NHY0-2"/>
</dbReference>
<dbReference type="Antibodypedia" id="2589">
    <property type="antibodies" value="75 antibodies from 21 providers"/>
</dbReference>
<dbReference type="DNASU" id="124872"/>
<dbReference type="Ensembl" id="ENST00000300404.2">
    <molecule id="Q8NHY0-1"/>
    <property type="protein sequence ID" value="ENSP00000300404.2"/>
    <property type="gene ID" value="ENSG00000167080.9"/>
</dbReference>
<dbReference type="Ensembl" id="ENST00000393354.7">
    <molecule id="Q8NHY0-2"/>
    <property type="protein sequence ID" value="ENSP00000377022.3"/>
    <property type="gene ID" value="ENSG00000167080.9"/>
</dbReference>
<dbReference type="Ensembl" id="ENST00000504681.5">
    <molecule id="Q8NHY0-3"/>
    <property type="protein sequence ID" value="ENSP00000425510.1"/>
    <property type="gene ID" value="ENSG00000167080.9"/>
</dbReference>
<dbReference type="GeneID" id="124872"/>
<dbReference type="KEGG" id="hsa:124872"/>
<dbReference type="MANE-Select" id="ENST00000393354.7">
    <molecule id="Q8NHY0-2"/>
    <property type="protein sequence ID" value="ENSP00000377022.3"/>
    <property type="RefSeq nucleotide sequence ID" value="NM_001159387.2"/>
    <property type="RefSeq protein sequence ID" value="NP_001152859.1"/>
</dbReference>
<dbReference type="UCSC" id="uc002ion.3">
    <molecule id="Q8NHY0-1"/>
    <property type="organism name" value="human"/>
</dbReference>
<dbReference type="AGR" id="HGNC:24136"/>
<dbReference type="CTD" id="124872"/>
<dbReference type="DisGeNET" id="124872"/>
<dbReference type="GeneCards" id="B4GALNT2"/>
<dbReference type="HGNC" id="HGNC:24136">
    <property type="gene designation" value="B4GALNT2"/>
</dbReference>
<dbReference type="HPA" id="ENSG00000167080">
    <property type="expression patterns" value="Tissue enhanced (intestine)"/>
</dbReference>
<dbReference type="MalaCards" id="B4GALNT2"/>
<dbReference type="MIM" id="111730">
    <property type="type" value="gene"/>
</dbReference>
<dbReference type="MIM" id="615018">
    <property type="type" value="phenotype"/>
</dbReference>
<dbReference type="neXtProt" id="NX_Q8NHY0"/>
<dbReference type="OpenTargets" id="ENSG00000167080"/>
<dbReference type="PharmGKB" id="PA134988070"/>
<dbReference type="VEuPathDB" id="HostDB:ENSG00000167080"/>
<dbReference type="eggNOG" id="ENOG502QTK7">
    <property type="taxonomic scope" value="Eukaryota"/>
</dbReference>
<dbReference type="GeneTree" id="ENSGT00390000006679"/>
<dbReference type="HOGENOM" id="CLU_036051_1_0_1"/>
<dbReference type="InParanoid" id="Q8NHY0"/>
<dbReference type="OMA" id="GDCIHRR"/>
<dbReference type="OrthoDB" id="2139606at2759"/>
<dbReference type="PAN-GO" id="Q8NHY0">
    <property type="GO annotations" value="3 GO annotations based on evolutionary models"/>
</dbReference>
<dbReference type="PhylomeDB" id="Q8NHY0"/>
<dbReference type="TreeFam" id="TF332297"/>
<dbReference type="BRENDA" id="2.4.1.165">
    <property type="organism ID" value="2681"/>
</dbReference>
<dbReference type="PathwayCommons" id="Q8NHY0"/>
<dbReference type="Reactome" id="R-HSA-446203">
    <property type="pathway name" value="Asparagine N-linked glycosylation"/>
</dbReference>
<dbReference type="Reactome" id="R-HSA-9037629">
    <property type="pathway name" value="Lewis blood group biosynthesis"/>
</dbReference>
<dbReference type="SignaLink" id="Q8NHY0"/>
<dbReference type="UniPathway" id="UPA00378"/>
<dbReference type="BioGRID-ORCS" id="124872">
    <property type="hits" value="11 hits in 1144 CRISPR screens"/>
</dbReference>
<dbReference type="ChiTaRS" id="B4GALNT2">
    <property type="organism name" value="human"/>
</dbReference>
<dbReference type="GeneWiki" id="B4GALNT2"/>
<dbReference type="GenomeRNAi" id="124872"/>
<dbReference type="Pharos" id="Q8NHY0">
    <property type="development level" value="Tbio"/>
</dbReference>
<dbReference type="PRO" id="PR:Q8NHY0"/>
<dbReference type="Proteomes" id="UP000005640">
    <property type="component" value="Chromosome 17"/>
</dbReference>
<dbReference type="RNAct" id="Q8NHY0">
    <property type="molecule type" value="protein"/>
</dbReference>
<dbReference type="Bgee" id="ENSG00000167080">
    <property type="expression patterns" value="Expressed in mucosa of transverse colon and 52 other cell types or tissues"/>
</dbReference>
<dbReference type="GO" id="GO:0030659">
    <property type="term" value="C:cytoplasmic vesicle membrane"/>
    <property type="evidence" value="ECO:0007669"/>
    <property type="project" value="UniProtKB-SubCell"/>
</dbReference>
<dbReference type="GO" id="GO:0000139">
    <property type="term" value="C:Golgi membrane"/>
    <property type="evidence" value="ECO:0000304"/>
    <property type="project" value="Reactome"/>
</dbReference>
<dbReference type="GO" id="GO:0016020">
    <property type="term" value="C:membrane"/>
    <property type="evidence" value="ECO:0000303"/>
    <property type="project" value="UniProtKB"/>
</dbReference>
<dbReference type="GO" id="GO:0008376">
    <property type="term" value="F:acetylgalactosaminyltransferase activity"/>
    <property type="evidence" value="ECO:0000314"/>
    <property type="project" value="UniProtKB"/>
</dbReference>
<dbReference type="GO" id="GO:0030259">
    <property type="term" value="P:lipid glycosylation"/>
    <property type="evidence" value="ECO:0007669"/>
    <property type="project" value="InterPro"/>
</dbReference>
<dbReference type="GO" id="GO:0022408">
    <property type="term" value="P:negative regulation of cell-cell adhesion"/>
    <property type="evidence" value="ECO:0000314"/>
    <property type="project" value="UniProtKB"/>
</dbReference>
<dbReference type="GO" id="GO:0009312">
    <property type="term" value="P:oligosaccharide biosynthetic process"/>
    <property type="evidence" value="ECO:0000304"/>
    <property type="project" value="Reactome"/>
</dbReference>
<dbReference type="GO" id="GO:0017038">
    <property type="term" value="P:protein import"/>
    <property type="evidence" value="ECO:0007669"/>
    <property type="project" value="Ensembl"/>
</dbReference>
<dbReference type="GO" id="GO:0018279">
    <property type="term" value="P:protein N-linked glycosylation via asparagine"/>
    <property type="evidence" value="ECO:0000304"/>
    <property type="project" value="Reactome"/>
</dbReference>
<dbReference type="GO" id="GO:0098528">
    <property type="term" value="P:skeletal muscle fiber differentiation"/>
    <property type="evidence" value="ECO:0007669"/>
    <property type="project" value="Ensembl"/>
</dbReference>
<dbReference type="GO" id="GO:0043403">
    <property type="term" value="P:skeletal muscle tissue regeneration"/>
    <property type="evidence" value="ECO:0007669"/>
    <property type="project" value="Ensembl"/>
</dbReference>
<dbReference type="GO" id="GO:0019276">
    <property type="term" value="P:UDP-N-acetylgalactosamine metabolic process"/>
    <property type="evidence" value="ECO:0000314"/>
    <property type="project" value="UniProtKB"/>
</dbReference>
<dbReference type="GO" id="GO:0006047">
    <property type="term" value="P:UDP-N-acetylglucosamine metabolic process"/>
    <property type="evidence" value="ECO:0000318"/>
    <property type="project" value="GO_Central"/>
</dbReference>
<dbReference type="CDD" id="cd00761">
    <property type="entry name" value="Glyco_tranf_GTA_type"/>
    <property type="match status" value="1"/>
</dbReference>
<dbReference type="FunFam" id="3.90.550.10:FF:000076">
    <property type="entry name" value="Beta-1,4 N-acetylgalactosaminyltransferase"/>
    <property type="match status" value="1"/>
</dbReference>
<dbReference type="Gene3D" id="3.90.550.10">
    <property type="entry name" value="Spore Coat Polysaccharide Biosynthesis Protein SpsA, Chain A"/>
    <property type="match status" value="1"/>
</dbReference>
<dbReference type="InterPro" id="IPR001173">
    <property type="entry name" value="Glyco_trans_2-like"/>
</dbReference>
<dbReference type="InterPro" id="IPR011143">
    <property type="entry name" value="GM2_synthase"/>
</dbReference>
<dbReference type="InterPro" id="IPR029044">
    <property type="entry name" value="Nucleotide-diphossugar_trans"/>
</dbReference>
<dbReference type="PANTHER" id="PTHR15046:SF2">
    <property type="entry name" value="BETA-1,4 N-ACETYLGALACTOSAMINYLTRANSFERASE 2"/>
    <property type="match status" value="1"/>
</dbReference>
<dbReference type="PANTHER" id="PTHR15046">
    <property type="entry name" value="GLYCO_TRANS_2-LIKE DOMAIN-CONTAINING PROTEIN"/>
    <property type="match status" value="1"/>
</dbReference>
<dbReference type="Pfam" id="PF00535">
    <property type="entry name" value="Glycos_transf_2"/>
    <property type="match status" value="1"/>
</dbReference>
<dbReference type="PIRSF" id="PIRSF000474">
    <property type="entry name" value="GM2_GD2_synthase"/>
    <property type="match status" value="1"/>
</dbReference>
<dbReference type="SUPFAM" id="SSF53448">
    <property type="entry name" value="Nucleotide-diphospho-sugar transferases"/>
    <property type="match status" value="1"/>
</dbReference>
<protein>
    <recommendedName>
        <fullName>Beta-1,4 N-acetylgalactosaminyltransferase 2</fullName>
        <ecNumber evidence="10">2.4.1.-</ecNumber>
    </recommendedName>
    <alternativeName>
        <fullName>Sd(a) beta-1,4-GalNAc transferase</fullName>
    </alternativeName>
    <alternativeName>
        <fullName>UDP-GalNAc:Neu5Aca2-3Galb-R b1,4-N-acetylgalactosaminyltransferase</fullName>
    </alternativeName>
</protein>
<name>B4GN2_HUMAN</name>
<gene>
    <name evidence="13 17" type="primary">B4GALNT2</name>
    <name type="synonym">GALGT2</name>
</gene>
<evidence type="ECO:0000255" key="1"/>
<evidence type="ECO:0000269" key="2">
    <source>
    </source>
</evidence>
<evidence type="ECO:0000269" key="3">
    <source>
    </source>
</evidence>
<evidence type="ECO:0000269" key="4">
    <source>
    </source>
</evidence>
<evidence type="ECO:0000269" key="5">
    <source>
    </source>
</evidence>
<evidence type="ECO:0000269" key="6">
    <source>
    </source>
</evidence>
<evidence type="ECO:0000269" key="7">
    <source>
    </source>
</evidence>
<evidence type="ECO:0000269" key="8">
    <source>
    </source>
</evidence>
<evidence type="ECO:0000269" key="9">
    <source>
    </source>
</evidence>
<evidence type="ECO:0000269" key="10">
    <source>
    </source>
</evidence>
<evidence type="ECO:0000303" key="11">
    <source>
    </source>
</evidence>
<evidence type="ECO:0000303" key="12">
    <source>
    </source>
</evidence>
<evidence type="ECO:0000303" key="13">
    <source>
    </source>
</evidence>
<evidence type="ECO:0000305" key="14"/>
<evidence type="ECO:0000305" key="15">
    <source>
    </source>
</evidence>
<evidence type="ECO:0000305" key="16">
    <source>
    </source>
</evidence>
<evidence type="ECO:0000312" key="17">
    <source>
        <dbReference type="HGNC" id="HGNC:24136"/>
    </source>
</evidence>
<feature type="chain" id="PRO_0000059103" description="Beta-1,4 N-acetylgalactosaminyltransferase 2">
    <location>
        <begin position="1"/>
        <end position="566"/>
    </location>
</feature>
<feature type="topological domain" description="Cytoplasmic" evidence="1">
    <location>
        <begin position="1"/>
        <end position="67"/>
    </location>
</feature>
<feature type="transmembrane region" description="Helical; Signal-anchor for type II membrane protein" evidence="1">
    <location>
        <begin position="68"/>
        <end position="88"/>
    </location>
</feature>
<feature type="topological domain" description="Lumenal" evidence="1">
    <location>
        <begin position="89"/>
        <end position="566"/>
    </location>
</feature>
<feature type="region of interest" description="ER exit and post-Golgi subcellular localization" evidence="8">
    <location>
        <begin position="1"/>
        <end position="22"/>
    </location>
</feature>
<feature type="short sequence motif" description="Vesicular targeting" evidence="8">
    <location>
        <begin position="9"/>
        <end position="15"/>
    </location>
</feature>
<feature type="splice variant" id="VSP_045195" description="In isoform 3." evidence="12">
    <location>
        <begin position="1"/>
        <end position="86"/>
    </location>
</feature>
<feature type="splice variant" id="VSP_017131" description="In isoform 2." evidence="11">
    <original>MGSAGFSVGKFHVEVASRGRECVSGTPECGNRLGSAGFGALCLELRGADPAWGPFAAHGRSRRQ</original>
    <variation>MTSG</variation>
    <location>
        <begin position="1"/>
        <end position="64"/>
    </location>
</feature>
<feature type="sequence variant" id="VAR_049238" description="In dbSNP:rs7207403." evidence="2 3 4">
    <original>A</original>
    <variation>D</variation>
    <location>
        <position position="40"/>
    </location>
</feature>
<feature type="sequence variant" id="VAR_086499" description="Found in individuals with Sd(a-) phenotype; no effect on Sd(a) epitope biosynthesis; dbSNP:rs148441237." evidence="9 10">
    <original>Q</original>
    <variation>R</variation>
    <location>
        <position position="436"/>
    </location>
</feature>
<feature type="sequence variant" id="VAR_035990" description="In a colorectal cancer sample; somatic mutation; dbSNP:rs2042934144." evidence="6">
    <original>P</original>
    <variation>H</variation>
    <location>
        <position position="459"/>
    </location>
</feature>
<feature type="sequence variant" id="VAR_049239" description="Found in individuals with Sd(a-) phenotype; loss of Sd(a) epitope biosynthesis; loss of homodimer formation; dbSNP:rs7224888." evidence="9 10">
    <original>C</original>
    <variation>R</variation>
    <location>
        <position position="466"/>
    </location>
</feature>
<feature type="sequence variant" id="VAR_086500" description="Found in individuals with Sd(a-) phenotype; no effect on Sd(a) epitope biosynthesis; dbSNP:rs61743617." evidence="9 10">
    <original>R</original>
    <variation>W</variation>
    <location>
        <position position="523"/>
    </location>
</feature>
<keyword id="KW-0025">Alternative splicing</keyword>
<keyword id="KW-0968">Cytoplasmic vesicle</keyword>
<keyword id="KW-1015">Disulfide bond</keyword>
<keyword id="KW-0328">Glycosyltransferase</keyword>
<keyword id="KW-0333">Golgi apparatus</keyword>
<keyword id="KW-0472">Membrane</keyword>
<keyword id="KW-1267">Proteomics identification</keyword>
<keyword id="KW-1185">Reference proteome</keyword>
<keyword id="KW-0735">Signal-anchor</keyword>
<keyword id="KW-0808">Transferase</keyword>
<keyword id="KW-0812">Transmembrane</keyword>
<keyword id="KW-1133">Transmembrane helix</keyword>